<sequence>MKIALGCDHIVTDTKMRVSEFLKSKGHEVIDVGTYDFTRTHYPIFGKKVGEQVVSGNADLGVCICGTGVGINNAVNKVPGVRSALVRDMTSALYAKEELNANVIGFGGRIIGELLMCDIIDAFINAEYKATEENKKLIAKIKHLETSNADQADPHFFDEFLEKWDRGEYHD</sequence>
<keyword id="KW-0413">Isomerase</keyword>
<keyword id="KW-0423">Lactose metabolism</keyword>
<protein>
    <recommendedName>
        <fullName evidence="1">Galactose-6-phosphate isomerase subunit LacB</fullName>
        <ecNumber evidence="1">5.3.1.26</ecNumber>
    </recommendedName>
</protein>
<organism>
    <name type="scientific">Staphylococcus aureus (strain N315)</name>
    <dbReference type="NCBI Taxonomy" id="158879"/>
    <lineage>
        <taxon>Bacteria</taxon>
        <taxon>Bacillati</taxon>
        <taxon>Bacillota</taxon>
        <taxon>Bacilli</taxon>
        <taxon>Bacillales</taxon>
        <taxon>Staphylococcaceae</taxon>
        <taxon>Staphylococcus</taxon>
    </lineage>
</organism>
<name>LACB_STAAN</name>
<feature type="chain" id="PRO_0000208142" description="Galactose-6-phosphate isomerase subunit LacB">
    <location>
        <begin position="1"/>
        <end position="171"/>
    </location>
</feature>
<gene>
    <name evidence="1" type="primary">lacB</name>
    <name type="ordered locus">SA1996</name>
</gene>
<dbReference type="EC" id="5.3.1.26" evidence="1"/>
<dbReference type="EMBL" id="BA000018">
    <property type="protein sequence ID" value="BAB43286.1"/>
    <property type="molecule type" value="Genomic_DNA"/>
</dbReference>
<dbReference type="PIR" id="E90015">
    <property type="entry name" value="E90015"/>
</dbReference>
<dbReference type="RefSeq" id="WP_000684743.1">
    <property type="nucleotide sequence ID" value="NC_002745.2"/>
</dbReference>
<dbReference type="SMR" id="P65647"/>
<dbReference type="EnsemblBacteria" id="BAB43286">
    <property type="protein sequence ID" value="BAB43286"/>
    <property type="gene ID" value="BAB43286"/>
</dbReference>
<dbReference type="KEGG" id="sau:SA1996"/>
<dbReference type="HOGENOM" id="CLU_091396_2_0_9"/>
<dbReference type="UniPathway" id="UPA00702">
    <property type="reaction ID" value="UER00714"/>
</dbReference>
<dbReference type="GO" id="GO:0050044">
    <property type="term" value="F:galactose-6-phosphate isomerase activity"/>
    <property type="evidence" value="ECO:0007669"/>
    <property type="project" value="UniProtKB-UniRule"/>
</dbReference>
<dbReference type="GO" id="GO:0004751">
    <property type="term" value="F:ribose-5-phosphate isomerase activity"/>
    <property type="evidence" value="ECO:0007669"/>
    <property type="project" value="TreeGrafter"/>
</dbReference>
<dbReference type="GO" id="GO:0019316">
    <property type="term" value="P:D-allose catabolic process"/>
    <property type="evidence" value="ECO:0007669"/>
    <property type="project" value="TreeGrafter"/>
</dbReference>
<dbReference type="GO" id="GO:0019388">
    <property type="term" value="P:galactose catabolic process"/>
    <property type="evidence" value="ECO:0007669"/>
    <property type="project" value="UniProtKB-UniPathway"/>
</dbReference>
<dbReference type="GO" id="GO:0019512">
    <property type="term" value="P:lactose catabolic process via tagatose-6-phosphate"/>
    <property type="evidence" value="ECO:0007669"/>
    <property type="project" value="UniProtKB-UniRule"/>
</dbReference>
<dbReference type="GO" id="GO:0009052">
    <property type="term" value="P:pentose-phosphate shunt, non-oxidative branch"/>
    <property type="evidence" value="ECO:0007669"/>
    <property type="project" value="TreeGrafter"/>
</dbReference>
<dbReference type="Gene3D" id="3.40.1400.10">
    <property type="entry name" value="Sugar-phosphate isomerase, RpiB/LacA/LacB"/>
    <property type="match status" value="1"/>
</dbReference>
<dbReference type="HAMAP" id="MF_01556">
    <property type="entry name" value="LacB"/>
    <property type="match status" value="1"/>
</dbReference>
<dbReference type="InterPro" id="IPR004784">
    <property type="entry name" value="LacB"/>
</dbReference>
<dbReference type="InterPro" id="IPR003500">
    <property type="entry name" value="RpiB_LacA_LacB"/>
</dbReference>
<dbReference type="InterPro" id="IPR036569">
    <property type="entry name" value="RpiB_LacA_LacB_sf"/>
</dbReference>
<dbReference type="NCBIfam" id="TIGR01119">
    <property type="entry name" value="lacB"/>
    <property type="match status" value="1"/>
</dbReference>
<dbReference type="NCBIfam" id="NF004051">
    <property type="entry name" value="PRK05571.1"/>
    <property type="match status" value="1"/>
</dbReference>
<dbReference type="NCBIfam" id="NF006381">
    <property type="entry name" value="PRK08622.1"/>
    <property type="match status" value="1"/>
</dbReference>
<dbReference type="NCBIfam" id="NF009258">
    <property type="entry name" value="PRK12615.1"/>
    <property type="match status" value="1"/>
</dbReference>
<dbReference type="NCBIfam" id="TIGR00689">
    <property type="entry name" value="rpiB_lacA_lacB"/>
    <property type="match status" value="1"/>
</dbReference>
<dbReference type="PANTHER" id="PTHR30345:SF0">
    <property type="entry name" value="DNA DAMAGE-REPAIR_TOLERATION PROTEIN DRT102"/>
    <property type="match status" value="1"/>
</dbReference>
<dbReference type="PANTHER" id="PTHR30345">
    <property type="entry name" value="RIBOSE-5-PHOSPHATE ISOMERASE B"/>
    <property type="match status" value="1"/>
</dbReference>
<dbReference type="Pfam" id="PF02502">
    <property type="entry name" value="LacAB_rpiB"/>
    <property type="match status" value="1"/>
</dbReference>
<dbReference type="PIRSF" id="PIRSF005384">
    <property type="entry name" value="RpiB_LacA_B"/>
    <property type="match status" value="1"/>
</dbReference>
<dbReference type="SUPFAM" id="SSF89623">
    <property type="entry name" value="Ribose/Galactose isomerase RpiB/AlsB"/>
    <property type="match status" value="1"/>
</dbReference>
<comment type="catalytic activity">
    <reaction evidence="1">
        <text>aldehydo-D-galactose 6-phosphate = keto-D-tagatose 6-phosphate</text>
        <dbReference type="Rhea" id="RHEA:13033"/>
        <dbReference type="ChEBI" id="CHEBI:58255"/>
        <dbReference type="ChEBI" id="CHEBI:134283"/>
        <dbReference type="EC" id="5.3.1.26"/>
    </reaction>
</comment>
<comment type="pathway">
    <text evidence="1">Carbohydrate metabolism; D-galactose 6-phosphate degradation; D-tagatose 6-phosphate from D-galactose 6-phosphate: step 1/1.</text>
</comment>
<comment type="subunit">
    <text evidence="1">Heteromultimeric protein consisting of LacA and LacB.</text>
</comment>
<comment type="similarity">
    <text evidence="1">Belongs to the LacAB/RpiB family.</text>
</comment>
<reference key="1">
    <citation type="journal article" date="2001" name="Lancet">
        <title>Whole genome sequencing of meticillin-resistant Staphylococcus aureus.</title>
        <authorList>
            <person name="Kuroda M."/>
            <person name="Ohta T."/>
            <person name="Uchiyama I."/>
            <person name="Baba T."/>
            <person name="Yuzawa H."/>
            <person name="Kobayashi I."/>
            <person name="Cui L."/>
            <person name="Oguchi A."/>
            <person name="Aoki K."/>
            <person name="Nagai Y."/>
            <person name="Lian J.-Q."/>
            <person name="Ito T."/>
            <person name="Kanamori M."/>
            <person name="Matsumaru H."/>
            <person name="Maruyama A."/>
            <person name="Murakami H."/>
            <person name="Hosoyama A."/>
            <person name="Mizutani-Ui Y."/>
            <person name="Takahashi N.K."/>
            <person name="Sawano T."/>
            <person name="Inoue R."/>
            <person name="Kaito C."/>
            <person name="Sekimizu K."/>
            <person name="Hirakawa H."/>
            <person name="Kuhara S."/>
            <person name="Goto S."/>
            <person name="Yabuzaki J."/>
            <person name="Kanehisa M."/>
            <person name="Yamashita A."/>
            <person name="Oshima K."/>
            <person name="Furuya K."/>
            <person name="Yoshino C."/>
            <person name="Shiba T."/>
            <person name="Hattori M."/>
            <person name="Ogasawara N."/>
            <person name="Hayashi H."/>
            <person name="Hiramatsu K."/>
        </authorList>
    </citation>
    <scope>NUCLEOTIDE SEQUENCE [LARGE SCALE GENOMIC DNA]</scope>
    <source>
        <strain>N315</strain>
    </source>
</reference>
<reference key="2">
    <citation type="submission" date="2007-10" db="UniProtKB">
        <title>Shotgun proteomic analysis of total and membrane protein extracts of S. aureus strain N315.</title>
        <authorList>
            <person name="Vaezzadeh A.R."/>
            <person name="Deshusses J."/>
            <person name="Lescuyer P."/>
            <person name="Hochstrasser D.F."/>
        </authorList>
    </citation>
    <scope>IDENTIFICATION BY MASS SPECTROMETRY [LARGE SCALE ANALYSIS]</scope>
    <source>
        <strain>N315</strain>
    </source>
</reference>
<accession>P65647</accession>
<accession>Q99S75</accession>
<evidence type="ECO:0000255" key="1">
    <source>
        <dbReference type="HAMAP-Rule" id="MF_01556"/>
    </source>
</evidence>
<proteinExistence type="evidence at protein level"/>